<organism>
    <name type="scientific">Daucus carota</name>
    <name type="common">Wild carrot</name>
    <dbReference type="NCBI Taxonomy" id="4039"/>
    <lineage>
        <taxon>Eukaryota</taxon>
        <taxon>Viridiplantae</taxon>
        <taxon>Streptophyta</taxon>
        <taxon>Embryophyta</taxon>
        <taxon>Tracheophyta</taxon>
        <taxon>Spermatophyta</taxon>
        <taxon>Magnoliopsida</taxon>
        <taxon>eudicotyledons</taxon>
        <taxon>Gunneridae</taxon>
        <taxon>Pentapetalae</taxon>
        <taxon>asterids</taxon>
        <taxon>campanulids</taxon>
        <taxon>Apiales</taxon>
        <taxon>Apiaceae</taxon>
        <taxon>Apioideae</taxon>
        <taxon>Scandiceae</taxon>
        <taxon>Daucinae</taxon>
        <taxon>Daucus</taxon>
        <taxon>Daucus sect. Daucus</taxon>
    </lineage>
</organism>
<name>CWP05_DAUCA</name>
<comment type="subcellular location">
    <subcellularLocation>
        <location evidence="1">Secreted</location>
        <location evidence="1">Cell wall</location>
    </subcellularLocation>
</comment>
<keyword id="KW-0134">Cell wall</keyword>
<keyword id="KW-0903">Direct protein sequencing</keyword>
<keyword id="KW-0964">Secreted</keyword>
<protein>
    <recommendedName>
        <fullName>32 kDa cell wall protein</fullName>
    </recommendedName>
</protein>
<feature type="chain" id="PRO_0000079634" description="32 kDa cell wall protein">
    <location>
        <begin position="1"/>
        <end position="15" status="greater than"/>
    </location>
</feature>
<feature type="non-terminal residue" evidence="2">
    <location>
        <position position="15"/>
    </location>
</feature>
<evidence type="ECO:0000269" key="1">
    <source>
    </source>
</evidence>
<evidence type="ECO:0000303" key="2">
    <source>
    </source>
</evidence>
<evidence type="ECO:0000305" key="3"/>
<dbReference type="GO" id="GO:0005576">
    <property type="term" value="C:extracellular region"/>
    <property type="evidence" value="ECO:0007669"/>
    <property type="project" value="UniProtKB-KW"/>
</dbReference>
<proteinExistence type="evidence at protein level"/>
<accession>P80755</accession>
<sequence length="15" mass="1796">AEYPNDVNLTVYWDP</sequence>
<reference evidence="3" key="1">
    <citation type="journal article" date="1997" name="J. Biol. Chem.">
        <title>Differential extraction and protein sequencing reveals major differences in patterns of primary cell wall proteins from plants.</title>
        <authorList>
            <person name="Robertson D."/>
            <person name="Mitchell G.P."/>
            <person name="Gilroy J.S."/>
            <person name="Gerrish C."/>
            <person name="Bolwell G.P."/>
            <person name="Slabas A.R."/>
        </authorList>
    </citation>
    <scope>PROTEIN SEQUENCE</scope>
    <scope>SUBCELLULAR LOCATION</scope>
</reference>